<gene>
    <name type="primary">dynE</name>
    <name type="synonym">dctn5</name>
    <name type="ORF">DDB_G0278579</name>
</gene>
<accession>Q54XU5</accession>
<sequence length="198" mass="21627">MQVQPKYFEKSQYIETLNGNKVSKSSILCGIMNIRLHGKTIIKPGVIVRGDLASVNIGRLSIISENTVIRPSSKKFKGSLVYFPQNIGDHVLVGEGCVISAASIGSNVYIGNNCIISKRCILKDCCIIADNTILPPDTVVPPFTYYSGTPGVYKEDLPDCIEQFQKEYTTSLYESFLPNTPASKGLPSTPTKLQTTTT</sequence>
<evidence type="ECO:0000250" key="1"/>
<evidence type="ECO:0000256" key="2">
    <source>
        <dbReference type="SAM" id="MobiDB-lite"/>
    </source>
</evidence>
<evidence type="ECO:0000305" key="3"/>
<reference key="1">
    <citation type="journal article" date="2005" name="Nature">
        <title>The genome of the social amoeba Dictyostelium discoideum.</title>
        <authorList>
            <person name="Eichinger L."/>
            <person name="Pachebat J.A."/>
            <person name="Gloeckner G."/>
            <person name="Rajandream M.A."/>
            <person name="Sucgang R."/>
            <person name="Berriman M."/>
            <person name="Song J."/>
            <person name="Olsen R."/>
            <person name="Szafranski K."/>
            <person name="Xu Q."/>
            <person name="Tunggal B."/>
            <person name="Kummerfeld S."/>
            <person name="Madera M."/>
            <person name="Konfortov B.A."/>
            <person name="Rivero F."/>
            <person name="Bankier A.T."/>
            <person name="Lehmann R."/>
            <person name="Hamlin N."/>
            <person name="Davies R."/>
            <person name="Gaudet P."/>
            <person name="Fey P."/>
            <person name="Pilcher K."/>
            <person name="Chen G."/>
            <person name="Saunders D."/>
            <person name="Sodergren E.J."/>
            <person name="Davis P."/>
            <person name="Kerhornou A."/>
            <person name="Nie X."/>
            <person name="Hall N."/>
            <person name="Anjard C."/>
            <person name="Hemphill L."/>
            <person name="Bason N."/>
            <person name="Farbrother P."/>
            <person name="Desany B."/>
            <person name="Just E."/>
            <person name="Morio T."/>
            <person name="Rost R."/>
            <person name="Churcher C.M."/>
            <person name="Cooper J."/>
            <person name="Haydock S."/>
            <person name="van Driessche N."/>
            <person name="Cronin A."/>
            <person name="Goodhead I."/>
            <person name="Muzny D.M."/>
            <person name="Mourier T."/>
            <person name="Pain A."/>
            <person name="Lu M."/>
            <person name="Harper D."/>
            <person name="Lindsay R."/>
            <person name="Hauser H."/>
            <person name="James K.D."/>
            <person name="Quiles M."/>
            <person name="Madan Babu M."/>
            <person name="Saito T."/>
            <person name="Buchrieser C."/>
            <person name="Wardroper A."/>
            <person name="Felder M."/>
            <person name="Thangavelu M."/>
            <person name="Johnson D."/>
            <person name="Knights A."/>
            <person name="Loulseged H."/>
            <person name="Mungall K.L."/>
            <person name="Oliver K."/>
            <person name="Price C."/>
            <person name="Quail M.A."/>
            <person name="Urushihara H."/>
            <person name="Hernandez J."/>
            <person name="Rabbinowitsch E."/>
            <person name="Steffen D."/>
            <person name="Sanders M."/>
            <person name="Ma J."/>
            <person name="Kohara Y."/>
            <person name="Sharp S."/>
            <person name="Simmonds M.N."/>
            <person name="Spiegler S."/>
            <person name="Tivey A."/>
            <person name="Sugano S."/>
            <person name="White B."/>
            <person name="Walker D."/>
            <person name="Woodward J.R."/>
            <person name="Winckler T."/>
            <person name="Tanaka Y."/>
            <person name="Shaulsky G."/>
            <person name="Schleicher M."/>
            <person name="Weinstock G.M."/>
            <person name="Rosenthal A."/>
            <person name="Cox E.C."/>
            <person name="Chisholm R.L."/>
            <person name="Gibbs R.A."/>
            <person name="Loomis W.F."/>
            <person name="Platzer M."/>
            <person name="Kay R.R."/>
            <person name="Williams J.G."/>
            <person name="Dear P.H."/>
            <person name="Noegel A.A."/>
            <person name="Barrell B.G."/>
            <person name="Kuspa A."/>
        </authorList>
    </citation>
    <scope>NUCLEOTIDE SEQUENCE [LARGE SCALE GENOMIC DNA]</scope>
    <source>
        <strain>AX4</strain>
    </source>
</reference>
<proteinExistence type="inferred from homology"/>
<comment type="subunit">
    <text evidence="1">Member of the pointed-end complex of the dynactin shoulder complex.</text>
</comment>
<comment type="subcellular location">
    <subcellularLocation>
        <location evidence="1">Cytoplasm</location>
        <location evidence="1">Cytoskeleton</location>
    </subcellularLocation>
</comment>
<comment type="similarity">
    <text evidence="3">Belongs to the dynactin subunits 5/6 family. Dynactin subunit 5 subfamily.</text>
</comment>
<feature type="chain" id="PRO_0000330322" description="Dynactin subunit 5">
    <location>
        <begin position="1"/>
        <end position="198"/>
    </location>
</feature>
<feature type="region of interest" description="Disordered" evidence="2">
    <location>
        <begin position="179"/>
        <end position="198"/>
    </location>
</feature>
<feature type="compositionally biased region" description="Polar residues" evidence="2">
    <location>
        <begin position="179"/>
        <end position="188"/>
    </location>
</feature>
<feature type="compositionally biased region" description="Low complexity" evidence="2">
    <location>
        <begin position="189"/>
        <end position="198"/>
    </location>
</feature>
<keyword id="KW-0963">Cytoplasm</keyword>
<keyword id="KW-0206">Cytoskeleton</keyword>
<keyword id="KW-1185">Reference proteome</keyword>
<dbReference type="EMBL" id="AAFI02000023">
    <property type="protein sequence ID" value="EAL68462.1"/>
    <property type="molecule type" value="Genomic_DNA"/>
</dbReference>
<dbReference type="RefSeq" id="XP_642457.1">
    <property type="nucleotide sequence ID" value="XM_637365.1"/>
</dbReference>
<dbReference type="SMR" id="Q54XU5"/>
<dbReference type="FunCoup" id="Q54XU5">
    <property type="interactions" value="197"/>
</dbReference>
<dbReference type="STRING" id="44689.Q54XU5"/>
<dbReference type="GlyGen" id="Q54XU5">
    <property type="glycosylation" value="1 site"/>
</dbReference>
<dbReference type="PaxDb" id="44689-DDB0231396"/>
<dbReference type="EnsemblProtists" id="EAL68462">
    <property type="protein sequence ID" value="EAL68462"/>
    <property type="gene ID" value="DDB_G0278579"/>
</dbReference>
<dbReference type="GeneID" id="8621666"/>
<dbReference type="KEGG" id="ddi:DDB_G0278579"/>
<dbReference type="dictyBase" id="DDB_G0278579">
    <property type="gene designation" value="dynE"/>
</dbReference>
<dbReference type="VEuPathDB" id="AmoebaDB:DDB_G0278579"/>
<dbReference type="eggNOG" id="KOG3121">
    <property type="taxonomic scope" value="Eukaryota"/>
</dbReference>
<dbReference type="HOGENOM" id="CLU_088622_2_0_1"/>
<dbReference type="InParanoid" id="Q54XU5"/>
<dbReference type="OMA" id="IPPFTEW"/>
<dbReference type="PhylomeDB" id="Q54XU5"/>
<dbReference type="Reactome" id="R-DDI-6807878">
    <property type="pathway name" value="COPI-mediated anterograde transport"/>
</dbReference>
<dbReference type="PRO" id="PR:Q54XU5"/>
<dbReference type="Proteomes" id="UP000002195">
    <property type="component" value="Chromosome 3"/>
</dbReference>
<dbReference type="GO" id="GO:0005869">
    <property type="term" value="C:dynactin complex"/>
    <property type="evidence" value="ECO:0000318"/>
    <property type="project" value="GO_Central"/>
</dbReference>
<dbReference type="GO" id="GO:0044354">
    <property type="term" value="C:macropinosome"/>
    <property type="evidence" value="ECO:0000314"/>
    <property type="project" value="dictyBase"/>
</dbReference>
<dbReference type="GO" id="GO:0001891">
    <property type="term" value="C:phagocytic cup"/>
    <property type="evidence" value="ECO:0000314"/>
    <property type="project" value="dictyBase"/>
</dbReference>
<dbReference type="GO" id="GO:0005886">
    <property type="term" value="C:plasma membrane"/>
    <property type="evidence" value="ECO:0000314"/>
    <property type="project" value="dictyBase"/>
</dbReference>
<dbReference type="CDD" id="cd03359">
    <property type="entry name" value="LbH_Dynactin_5"/>
    <property type="match status" value="1"/>
</dbReference>
<dbReference type="FunFam" id="2.160.10.10:FF:000014">
    <property type="entry name" value="dynactin subunit 5"/>
    <property type="match status" value="1"/>
</dbReference>
<dbReference type="Gene3D" id="2.160.10.10">
    <property type="entry name" value="Hexapeptide repeat proteins"/>
    <property type="match status" value="1"/>
</dbReference>
<dbReference type="InterPro" id="IPR047125">
    <property type="entry name" value="DCTN5"/>
</dbReference>
<dbReference type="InterPro" id="IPR011004">
    <property type="entry name" value="Trimer_LpxA-like_sf"/>
</dbReference>
<dbReference type="PANTHER" id="PTHR46126">
    <property type="entry name" value="DYNACTIN SUBUNIT 5"/>
    <property type="match status" value="1"/>
</dbReference>
<dbReference type="PANTHER" id="PTHR46126:SF1">
    <property type="entry name" value="DYNACTIN SUBUNIT 5"/>
    <property type="match status" value="1"/>
</dbReference>
<dbReference type="Pfam" id="PF21711">
    <property type="entry name" value="DCTN5"/>
    <property type="match status" value="1"/>
</dbReference>
<dbReference type="SUPFAM" id="SSF51161">
    <property type="entry name" value="Trimeric LpxA-like enzymes"/>
    <property type="match status" value="1"/>
</dbReference>
<organism>
    <name type="scientific">Dictyostelium discoideum</name>
    <name type="common">Social amoeba</name>
    <dbReference type="NCBI Taxonomy" id="44689"/>
    <lineage>
        <taxon>Eukaryota</taxon>
        <taxon>Amoebozoa</taxon>
        <taxon>Evosea</taxon>
        <taxon>Eumycetozoa</taxon>
        <taxon>Dictyostelia</taxon>
        <taxon>Dictyosteliales</taxon>
        <taxon>Dictyosteliaceae</taxon>
        <taxon>Dictyostelium</taxon>
    </lineage>
</organism>
<protein>
    <recommendedName>
        <fullName>Dynactin subunit 5</fullName>
    </recommendedName>
</protein>
<name>DCTN5_DICDI</name>